<sequence>MSNLSNLRHKLQNGLIASCQPVPGSAMDTPEIVAAMACAALAGGAVGLRIEGISNIQAVRRATDAPIIGIIKRDLPDSEVRITPWLEDIDALSAAGADIIAFDVTCRERPVSVADLYQRARATGCLTMADASNIDDGLLAHHLGIDFIGTTLSGYTQATVPTEPDLALVTQLAQAGCRVIAEGRYHSPALAAAAISAGAYAVTVGSAITRIEHICGWFCDAIKQCETEKLTEY</sequence>
<proteinExistence type="inferred from homology"/>
<gene>
    <name evidence="1" type="primary">nanE</name>
    <name type="ordered locus">YPA_2211</name>
</gene>
<protein>
    <recommendedName>
        <fullName evidence="1">Putative N-acetylmannosamine-6-phosphate 2-epimerase</fullName>
        <ecNumber evidence="1">5.1.3.9</ecNumber>
    </recommendedName>
    <alternativeName>
        <fullName evidence="1">ManNAc-6-P epimerase</fullName>
    </alternativeName>
</protein>
<accession>Q1C5U6</accession>
<evidence type="ECO:0000255" key="1">
    <source>
        <dbReference type="HAMAP-Rule" id="MF_01235"/>
    </source>
</evidence>
<organism>
    <name type="scientific">Yersinia pestis bv. Antiqua (strain Antiqua)</name>
    <dbReference type="NCBI Taxonomy" id="360102"/>
    <lineage>
        <taxon>Bacteria</taxon>
        <taxon>Pseudomonadati</taxon>
        <taxon>Pseudomonadota</taxon>
        <taxon>Gammaproteobacteria</taxon>
        <taxon>Enterobacterales</taxon>
        <taxon>Yersiniaceae</taxon>
        <taxon>Yersinia</taxon>
    </lineage>
</organism>
<reference key="1">
    <citation type="journal article" date="2006" name="J. Bacteriol.">
        <title>Complete genome sequence of Yersinia pestis strains Antiqua and Nepal516: evidence of gene reduction in an emerging pathogen.</title>
        <authorList>
            <person name="Chain P.S.G."/>
            <person name="Hu P."/>
            <person name="Malfatti S.A."/>
            <person name="Radnedge L."/>
            <person name="Larimer F."/>
            <person name="Vergez L.M."/>
            <person name="Worsham P."/>
            <person name="Chu M.C."/>
            <person name="Andersen G.L."/>
        </authorList>
    </citation>
    <scope>NUCLEOTIDE SEQUENCE [LARGE SCALE GENOMIC DNA]</scope>
    <source>
        <strain>Antiqua</strain>
    </source>
</reference>
<feature type="chain" id="PRO_0000301499" description="Putative N-acetylmannosamine-6-phosphate 2-epimerase">
    <location>
        <begin position="1"/>
        <end position="233"/>
    </location>
</feature>
<keyword id="KW-0119">Carbohydrate metabolism</keyword>
<keyword id="KW-0413">Isomerase</keyword>
<name>NANE_YERPA</name>
<comment type="function">
    <text evidence="1">Converts N-acetylmannosamine-6-phosphate (ManNAc-6-P) to N-acetylglucosamine-6-phosphate (GlcNAc-6-P).</text>
</comment>
<comment type="catalytic activity">
    <reaction evidence="1">
        <text>an N-acyl-D-glucosamine 6-phosphate = an N-acyl-D-mannosamine 6-phosphate</text>
        <dbReference type="Rhea" id="RHEA:23932"/>
        <dbReference type="ChEBI" id="CHEBI:57599"/>
        <dbReference type="ChEBI" id="CHEBI:57666"/>
        <dbReference type="EC" id="5.1.3.9"/>
    </reaction>
</comment>
<comment type="pathway">
    <text evidence="1">Amino-sugar metabolism; N-acetylneuraminate degradation; D-fructose 6-phosphate from N-acetylneuraminate: step 3/5.</text>
</comment>
<comment type="similarity">
    <text evidence="1">Belongs to the NanE family.</text>
</comment>
<dbReference type="EC" id="5.1.3.9" evidence="1"/>
<dbReference type="EMBL" id="CP000308">
    <property type="protein sequence ID" value="ABG14176.1"/>
    <property type="molecule type" value="Genomic_DNA"/>
</dbReference>
<dbReference type="SMR" id="Q1C5U6"/>
<dbReference type="KEGG" id="ypa:YPA_2211"/>
<dbReference type="UniPathway" id="UPA00629">
    <property type="reaction ID" value="UER00682"/>
</dbReference>
<dbReference type="Proteomes" id="UP000001971">
    <property type="component" value="Chromosome"/>
</dbReference>
<dbReference type="GO" id="GO:0005829">
    <property type="term" value="C:cytosol"/>
    <property type="evidence" value="ECO:0007669"/>
    <property type="project" value="TreeGrafter"/>
</dbReference>
<dbReference type="GO" id="GO:0047465">
    <property type="term" value="F:N-acylglucosamine-6-phosphate 2-epimerase activity"/>
    <property type="evidence" value="ECO:0007669"/>
    <property type="project" value="UniProtKB-EC"/>
</dbReference>
<dbReference type="GO" id="GO:0005975">
    <property type="term" value="P:carbohydrate metabolic process"/>
    <property type="evidence" value="ECO:0007669"/>
    <property type="project" value="UniProtKB-UniRule"/>
</dbReference>
<dbReference type="GO" id="GO:0006053">
    <property type="term" value="P:N-acetylmannosamine catabolic process"/>
    <property type="evidence" value="ECO:0007669"/>
    <property type="project" value="TreeGrafter"/>
</dbReference>
<dbReference type="GO" id="GO:0019262">
    <property type="term" value="P:N-acetylneuraminate catabolic process"/>
    <property type="evidence" value="ECO:0007669"/>
    <property type="project" value="UniProtKB-UniRule"/>
</dbReference>
<dbReference type="CDD" id="cd04729">
    <property type="entry name" value="NanE"/>
    <property type="match status" value="1"/>
</dbReference>
<dbReference type="FunFam" id="3.20.20.70:FF:000035">
    <property type="entry name" value="Putative N-acetylmannosamine-6-phosphate 2-epimerase"/>
    <property type="match status" value="1"/>
</dbReference>
<dbReference type="Gene3D" id="3.20.20.70">
    <property type="entry name" value="Aldolase class I"/>
    <property type="match status" value="1"/>
</dbReference>
<dbReference type="HAMAP" id="MF_01235">
    <property type="entry name" value="ManNAc6P_epimer"/>
    <property type="match status" value="1"/>
</dbReference>
<dbReference type="InterPro" id="IPR013785">
    <property type="entry name" value="Aldolase_TIM"/>
</dbReference>
<dbReference type="InterPro" id="IPR007260">
    <property type="entry name" value="NanE"/>
</dbReference>
<dbReference type="InterPro" id="IPR011060">
    <property type="entry name" value="RibuloseP-bd_barrel"/>
</dbReference>
<dbReference type="NCBIfam" id="NF002231">
    <property type="entry name" value="PRK01130.1"/>
    <property type="match status" value="1"/>
</dbReference>
<dbReference type="PANTHER" id="PTHR36204">
    <property type="entry name" value="N-ACETYLMANNOSAMINE-6-PHOSPHATE 2-EPIMERASE-RELATED"/>
    <property type="match status" value="1"/>
</dbReference>
<dbReference type="PANTHER" id="PTHR36204:SF1">
    <property type="entry name" value="N-ACETYLMANNOSAMINE-6-PHOSPHATE 2-EPIMERASE-RELATED"/>
    <property type="match status" value="1"/>
</dbReference>
<dbReference type="Pfam" id="PF04131">
    <property type="entry name" value="NanE"/>
    <property type="match status" value="1"/>
</dbReference>
<dbReference type="SUPFAM" id="SSF51366">
    <property type="entry name" value="Ribulose-phoshate binding barrel"/>
    <property type="match status" value="1"/>
</dbReference>